<organism>
    <name type="scientific">Bos taurus</name>
    <name type="common">Bovine</name>
    <dbReference type="NCBI Taxonomy" id="9913"/>
    <lineage>
        <taxon>Eukaryota</taxon>
        <taxon>Metazoa</taxon>
        <taxon>Chordata</taxon>
        <taxon>Craniata</taxon>
        <taxon>Vertebrata</taxon>
        <taxon>Euteleostomi</taxon>
        <taxon>Mammalia</taxon>
        <taxon>Eutheria</taxon>
        <taxon>Laurasiatheria</taxon>
        <taxon>Artiodactyla</taxon>
        <taxon>Ruminantia</taxon>
        <taxon>Pecora</taxon>
        <taxon>Bovidae</taxon>
        <taxon>Bovinae</taxon>
        <taxon>Bos</taxon>
    </lineage>
</organism>
<reference key="1">
    <citation type="journal article" date="1995" name="Brain Res. Mol. Brain Res.">
        <title>Cloning and expression of a bovine glutamate transporter.</title>
        <authorList>
            <person name="Inoue K."/>
            <person name="Sakaitani M."/>
            <person name="Shimada S."/>
            <person name="Tohyama M."/>
        </authorList>
    </citation>
    <scope>NUCLEOTIDE SEQUENCE [MRNA]</scope>
    <scope>FUNCTION</scope>
    <scope>SUBCELLULAR LOCATION</scope>
    <source>
        <tissue>Retina</tissue>
    </source>
</reference>
<reference key="2">
    <citation type="submission" date="2006-08" db="EMBL/GenBank/DDBJ databases">
        <authorList>
            <consortium name="NIH - Mammalian Gene Collection (MGC) project"/>
        </authorList>
    </citation>
    <scope>NUCLEOTIDE SEQUENCE [LARGE SCALE MRNA]</scope>
    <source>
        <strain>Hereford</strain>
        <tissue>Fetal cerebellum</tissue>
    </source>
</reference>
<evidence type="ECO:0000250" key="1">
    <source>
        <dbReference type="UniProtKB" id="O57321"/>
    </source>
</evidence>
<evidence type="ECO:0000250" key="2">
    <source>
        <dbReference type="UniProtKB" id="O59010"/>
    </source>
</evidence>
<evidence type="ECO:0000250" key="3">
    <source>
        <dbReference type="UniProtKB" id="P24942"/>
    </source>
</evidence>
<evidence type="ECO:0000250" key="4">
    <source>
        <dbReference type="UniProtKB" id="P43003"/>
    </source>
</evidence>
<evidence type="ECO:0000250" key="5">
    <source>
        <dbReference type="UniProtKB" id="P56564"/>
    </source>
</evidence>
<evidence type="ECO:0000269" key="6">
    <source>
    </source>
</evidence>
<evidence type="ECO:0000303" key="7">
    <source>
    </source>
</evidence>
<evidence type="ECO:0000305" key="8"/>
<comment type="function">
    <text evidence="1 5 6">Sodium-dependent, high-affinity amino acid transporter that mediates the uptake of L-glutamate and also L-aspartate and D-aspartate (PubMed:7723632). Functions as a symporter that transports one amino acid molecule together with two or three Na(+) ions and one proton, in parallel with the counter-transport of one K(+) ion (By similarity). Plays a redundant role in the rapid removal of released glutamate from the synaptic cleft, which is essential for terminating the postsynaptic action of glutamate (By similarity).</text>
</comment>
<comment type="catalytic activity">
    <reaction evidence="4">
        <text>K(+)(in) + L-glutamate(out) + 3 Na(+)(out) + H(+)(out) = K(+)(out) + L-glutamate(in) + 3 Na(+)(in) + H(+)(in)</text>
        <dbReference type="Rhea" id="RHEA:70699"/>
        <dbReference type="ChEBI" id="CHEBI:15378"/>
        <dbReference type="ChEBI" id="CHEBI:29101"/>
        <dbReference type="ChEBI" id="CHEBI:29103"/>
        <dbReference type="ChEBI" id="CHEBI:29985"/>
    </reaction>
</comment>
<comment type="catalytic activity">
    <reaction evidence="4">
        <text>K(+)(in) + L-aspartate(out) + 3 Na(+)(out) + H(+)(out) = K(+)(out) + L-aspartate(in) + 3 Na(+)(in) + H(+)(in)</text>
        <dbReference type="Rhea" id="RHEA:70851"/>
        <dbReference type="ChEBI" id="CHEBI:15378"/>
        <dbReference type="ChEBI" id="CHEBI:29101"/>
        <dbReference type="ChEBI" id="CHEBI:29103"/>
        <dbReference type="ChEBI" id="CHEBI:29991"/>
    </reaction>
</comment>
<comment type="catalytic activity">
    <reaction evidence="4">
        <text>D-aspartate(out) + K(+)(in) + 3 Na(+)(out) + H(+)(out) = D-aspartate(in) + K(+)(out) + 3 Na(+)(in) + H(+)(in)</text>
        <dbReference type="Rhea" id="RHEA:71379"/>
        <dbReference type="ChEBI" id="CHEBI:15378"/>
        <dbReference type="ChEBI" id="CHEBI:29101"/>
        <dbReference type="ChEBI" id="CHEBI:29103"/>
        <dbReference type="ChEBI" id="CHEBI:29990"/>
    </reaction>
</comment>
<comment type="subunit">
    <text evidence="4">Homotrimer (By similarity).</text>
</comment>
<comment type="subcellular location">
    <subcellularLocation>
        <location evidence="6">Cell membrane</location>
        <topology>Multi-pass membrane protein</topology>
    </subcellularLocation>
</comment>
<comment type="domain">
    <text evidence="4">Contains eight transmembrane regions plus two helical hairpins that dip into the membrane. These helical hairpin structures play an important role in the transport process. The first enters the membrane from the cytoplasmic side, the second one from the extracellular side. During the transport cycle, the regions involved in amino acid transport, and especially the helical hairpins, move vertically by about 15-18 Angstroms, alternating between exposure to the aqueous phase and reinsertion in the lipid bilayer. In contrast, the regions involved in trimerization do not move.</text>
</comment>
<comment type="PTM">
    <text evidence="3">Glycosylated.</text>
</comment>
<comment type="similarity">
    <text evidence="8">Belongs to the dicarboxylate/amino acid:cation symporter (DAACS) (TC 2.A.23) family. SLC1A3 subfamily.</text>
</comment>
<protein>
    <recommendedName>
        <fullName>Excitatory amino acid transporter 1</fullName>
    </recommendedName>
    <alternativeName>
        <fullName>Sodium-dependent glutamate/aspartate transporter 1</fullName>
        <shortName>GLAST-1</shortName>
    </alternativeName>
    <alternativeName>
        <fullName>Solute carrier family 1 member 3</fullName>
    </alternativeName>
</protein>
<gene>
    <name type="primary">SLC1A3</name>
    <name type="synonym">EAAT1</name>
    <name evidence="7" type="synonym">GLAST</name>
    <name type="synonym">GLAST1</name>
</gene>
<sequence length="542" mass="59591">MTKSNGEEARLGGRMERFQQGVRKRTLLAKKKVQNITKEDVKSYLFRNAFVLLTVTAVIVGTILGFTLRPYRMSYREVKYFSFPGELLMRMLQMLVLPLIISSLVTGMAALDSKASGKMGMRAVVYYMTTTIIAVVIGIIIVIIIHPGKGTKENMHREGKIVQVTAADAFLDLIRNMFPPNLVEACFKQFKTNYEKRSFKVPIQPNETLVGAVINNVSEAMETLTRITEELVPVPGSVNGVNALGLVVFSMCFGFVIGNMKEQGQALREFFDSLNEAIMRLVAVIMWYAPLGILFLIAGKIVEMEDMGVIGGQLAMYTVTVIVGLLIHAVIVLPLLYFLVTRKNPWVFIGGLLQALITALGTSSSSATLPITFKCLEENNGVDKRVTRFVLPVGATINMDGTALYEALAAIFIAQVNNFELNFGQIITISITATAASIGAAGIPQAGLVTMVIVLTSVGLPTDDITLIIAVDWFLDRLRTTTNVLGDSLGAGIVEHLSRHELKNRDVEMGNSVIEENEMKKPYQLISQESEIEKSMDSETKM</sequence>
<name>EAA1_BOVIN</name>
<keyword id="KW-0029">Amino-acid transport</keyword>
<keyword id="KW-1003">Cell membrane</keyword>
<keyword id="KW-0868">Chloride</keyword>
<keyword id="KW-0325">Glycoprotein</keyword>
<keyword id="KW-0472">Membrane</keyword>
<keyword id="KW-0479">Metal-binding</keyword>
<keyword id="KW-0597">Phosphoprotein</keyword>
<keyword id="KW-0630">Potassium</keyword>
<keyword id="KW-1185">Reference proteome</keyword>
<keyword id="KW-0915">Sodium</keyword>
<keyword id="KW-0769">Symport</keyword>
<keyword id="KW-0812">Transmembrane</keyword>
<keyword id="KW-1133">Transmembrane helix</keyword>
<keyword id="KW-0813">Transport</keyword>
<proteinExistence type="evidence at transcript level"/>
<feature type="chain" id="PRO_0000202056" description="Excitatory amino acid transporter 1">
    <location>
        <begin position="1"/>
        <end position="542"/>
    </location>
</feature>
<feature type="topological domain" description="Cytoplasmic" evidence="4">
    <location>
        <begin position="1"/>
        <end position="47"/>
    </location>
</feature>
<feature type="transmembrane region" description="Helical; Name=1" evidence="4">
    <location>
        <begin position="48"/>
        <end position="68"/>
    </location>
</feature>
<feature type="topological domain" description="Extracellular" evidence="4">
    <location>
        <begin position="69"/>
        <end position="86"/>
    </location>
</feature>
<feature type="transmembrane region" description="Helical; Name=2" evidence="4">
    <location>
        <begin position="87"/>
        <end position="108"/>
    </location>
</feature>
<feature type="topological domain" description="Cytoplasmic" evidence="4">
    <location>
        <begin position="109"/>
        <end position="122"/>
    </location>
</feature>
<feature type="transmembrane region" description="Helical; Name=3" evidence="4">
    <location>
        <begin position="123"/>
        <end position="145"/>
    </location>
</feature>
<feature type="topological domain" description="Extracellular" evidence="4">
    <location>
        <begin position="146"/>
        <end position="236"/>
    </location>
</feature>
<feature type="transmembrane region" description="Helical; Name=4" evidence="4">
    <location>
        <begin position="237"/>
        <end position="260"/>
    </location>
</feature>
<feature type="topological domain" description="Cytoplasmic" evidence="4">
    <location>
        <begin position="261"/>
        <end position="269"/>
    </location>
</feature>
<feature type="transmembrane region" description="Helical; Name=5" evidence="4">
    <location>
        <begin position="270"/>
        <end position="297"/>
    </location>
</feature>
<feature type="topological domain" description="Extracellular" evidence="4">
    <location>
        <begin position="298"/>
        <end position="318"/>
    </location>
</feature>
<feature type="transmembrane region" description="Helical; Name=6" evidence="4">
    <location>
        <begin position="319"/>
        <end position="340"/>
    </location>
</feature>
<feature type="topological domain" description="Cytoplasmic" evidence="4">
    <location>
        <begin position="341"/>
        <end position="345"/>
    </location>
</feature>
<feature type="intramembrane region" description="Discontinuously helical" evidence="4">
    <location>
        <begin position="346"/>
        <end position="376"/>
    </location>
</feature>
<feature type="topological domain" description="Cytoplasmic" evidence="4">
    <location>
        <begin position="377"/>
        <end position="385"/>
    </location>
</feature>
<feature type="transmembrane region" description="Helical; Name=7" evidence="4">
    <location>
        <begin position="386"/>
        <end position="412"/>
    </location>
</feature>
<feature type="topological domain" description="Extracellular" evidence="4">
    <location>
        <begin position="413"/>
        <end position="425"/>
    </location>
</feature>
<feature type="intramembrane region" description="Discontinuously helical" evidence="4">
    <location>
        <begin position="426"/>
        <end position="459"/>
    </location>
</feature>
<feature type="topological domain" description="Extracellular" evidence="4">
    <location>
        <begin position="460"/>
        <end position="472"/>
    </location>
</feature>
<feature type="transmembrane region" description="Helical; Name=8" evidence="4">
    <location>
        <begin position="473"/>
        <end position="494"/>
    </location>
</feature>
<feature type="topological domain" description="Cytoplasmic" evidence="4">
    <location>
        <begin position="495"/>
        <end position="542"/>
    </location>
</feature>
<feature type="binding site" evidence="2">
    <location>
        <begin position="363"/>
        <end position="365"/>
    </location>
    <ligand>
        <name>L-aspartate</name>
        <dbReference type="ChEBI" id="CHEBI:29991"/>
    </ligand>
</feature>
<feature type="binding site" evidence="2">
    <location>
        <position position="394"/>
    </location>
    <ligand>
        <name>Na(+)</name>
        <dbReference type="ChEBI" id="CHEBI:29101"/>
        <label>1</label>
    </ligand>
</feature>
<feature type="binding site" evidence="2">
    <location>
        <position position="396"/>
    </location>
    <ligand>
        <name>Na(+)</name>
        <dbReference type="ChEBI" id="CHEBI:29101"/>
        <label>2</label>
    </ligand>
</feature>
<feature type="binding site" evidence="2">
    <location>
        <position position="398"/>
    </location>
    <ligand>
        <name>Na(+)</name>
        <dbReference type="ChEBI" id="CHEBI:29101"/>
        <label>1</label>
    </ligand>
</feature>
<feature type="binding site" evidence="2">
    <location>
        <position position="402"/>
    </location>
    <ligand>
        <name>L-aspartate</name>
        <dbReference type="ChEBI" id="CHEBI:29991"/>
    </ligand>
</feature>
<feature type="binding site" evidence="4">
    <location>
        <begin position="443"/>
        <end position="447"/>
    </location>
    <ligand>
        <name>L-aspartate</name>
        <dbReference type="ChEBI" id="CHEBI:29991"/>
    </ligand>
</feature>
<feature type="binding site" evidence="2">
    <location>
        <position position="476"/>
    </location>
    <ligand>
        <name>L-aspartate</name>
        <dbReference type="ChEBI" id="CHEBI:29991"/>
    </ligand>
</feature>
<feature type="binding site" evidence="2">
    <location>
        <position position="483"/>
    </location>
    <ligand>
        <name>L-aspartate</name>
        <dbReference type="ChEBI" id="CHEBI:29991"/>
    </ligand>
</feature>
<feature type="binding site" evidence="2">
    <location>
        <position position="483"/>
    </location>
    <ligand>
        <name>Na(+)</name>
        <dbReference type="ChEBI" id="CHEBI:29101"/>
        <label>1</label>
    </ligand>
</feature>
<feature type="binding site" evidence="2">
    <location>
        <position position="487"/>
    </location>
    <ligand>
        <name>Na(+)</name>
        <dbReference type="ChEBI" id="CHEBI:29101"/>
        <label>1</label>
    </ligand>
</feature>
<feature type="modified residue" description="Phosphoserine" evidence="4">
    <location>
        <position position="512"/>
    </location>
</feature>
<dbReference type="EMBL" id="D82056">
    <property type="protein sequence ID" value="BAA11527.1"/>
    <property type="molecule type" value="mRNA"/>
</dbReference>
<dbReference type="EMBL" id="BC120125">
    <property type="protein sequence ID" value="AAI20126.1"/>
    <property type="molecule type" value="mRNA"/>
</dbReference>
<dbReference type="RefSeq" id="NP_777025.1">
    <property type="nucleotide sequence ID" value="NM_174600.2"/>
</dbReference>
<dbReference type="SMR" id="P46411"/>
<dbReference type="FunCoup" id="P46411">
    <property type="interactions" value="737"/>
</dbReference>
<dbReference type="STRING" id="9913.ENSBTAP00000024287"/>
<dbReference type="PaxDb" id="9913-ENSBTAP00000024287"/>
<dbReference type="Ensembl" id="ENSBTAT00000024287.4">
    <property type="protein sequence ID" value="ENSBTAP00000024287.3"/>
    <property type="gene ID" value="ENSBTAG00000018245.5"/>
</dbReference>
<dbReference type="GeneID" id="282354"/>
<dbReference type="KEGG" id="bta:282354"/>
<dbReference type="CTD" id="6507"/>
<dbReference type="VEuPathDB" id="HostDB:ENSBTAG00000018245"/>
<dbReference type="VGNC" id="VGNC:34713">
    <property type="gene designation" value="SLC1A3"/>
</dbReference>
<dbReference type="eggNOG" id="KOG3787">
    <property type="taxonomic scope" value="Eukaryota"/>
</dbReference>
<dbReference type="GeneTree" id="ENSGT00940000155464"/>
<dbReference type="HOGENOM" id="CLU_019375_3_2_1"/>
<dbReference type="InParanoid" id="P46411"/>
<dbReference type="OMA" id="VDWFMGI"/>
<dbReference type="OrthoDB" id="5877963at2759"/>
<dbReference type="TreeFam" id="TF315206"/>
<dbReference type="Reactome" id="R-BTA-210455">
    <property type="pathway name" value="Astrocytic Glutamate-Glutamine Uptake And Metabolism"/>
</dbReference>
<dbReference type="Reactome" id="R-BTA-210500">
    <property type="pathway name" value="Glutamate Neurotransmitter Release Cycle"/>
</dbReference>
<dbReference type="Reactome" id="R-BTA-425393">
    <property type="pathway name" value="Transport of inorganic cations/anions and amino acids/oligopeptides"/>
</dbReference>
<dbReference type="Proteomes" id="UP000009136">
    <property type="component" value="Chromosome 20"/>
</dbReference>
<dbReference type="Bgee" id="ENSBTAG00000018245">
    <property type="expression patterns" value="Expressed in occipital lobe and 93 other cell types or tissues"/>
</dbReference>
<dbReference type="GO" id="GO:0009986">
    <property type="term" value="C:cell surface"/>
    <property type="evidence" value="ECO:0007669"/>
    <property type="project" value="Ensembl"/>
</dbReference>
<dbReference type="GO" id="GO:0031410">
    <property type="term" value="C:cytoplasmic vesicle"/>
    <property type="evidence" value="ECO:0000314"/>
    <property type="project" value="ARUK-UCL"/>
</dbReference>
<dbReference type="GO" id="GO:0043005">
    <property type="term" value="C:neuron projection"/>
    <property type="evidence" value="ECO:0007669"/>
    <property type="project" value="Ensembl"/>
</dbReference>
<dbReference type="GO" id="GO:0043025">
    <property type="term" value="C:neuronal cell body"/>
    <property type="evidence" value="ECO:0007669"/>
    <property type="project" value="Ensembl"/>
</dbReference>
<dbReference type="GO" id="GO:0048471">
    <property type="term" value="C:perinuclear region of cytoplasm"/>
    <property type="evidence" value="ECO:0000314"/>
    <property type="project" value="ARUK-UCL"/>
</dbReference>
<dbReference type="GO" id="GO:0005886">
    <property type="term" value="C:plasma membrane"/>
    <property type="evidence" value="ECO:0000250"/>
    <property type="project" value="UniProtKB"/>
</dbReference>
<dbReference type="GO" id="GO:0045202">
    <property type="term" value="C:synapse"/>
    <property type="evidence" value="ECO:0007669"/>
    <property type="project" value="Ensembl"/>
</dbReference>
<dbReference type="GO" id="GO:0016595">
    <property type="term" value="F:glutamate binding"/>
    <property type="evidence" value="ECO:0007669"/>
    <property type="project" value="Ensembl"/>
</dbReference>
<dbReference type="GO" id="GO:0015501">
    <property type="term" value="F:glutamate:sodium symporter activity"/>
    <property type="evidence" value="ECO:0000250"/>
    <property type="project" value="UniProtKB"/>
</dbReference>
<dbReference type="GO" id="GO:0005314">
    <property type="term" value="F:high-affinity L-glutamate transmembrane transporter activity"/>
    <property type="evidence" value="ECO:0000250"/>
    <property type="project" value="UniProtKB"/>
</dbReference>
<dbReference type="GO" id="GO:0005313">
    <property type="term" value="F:L-glutamate transmembrane transporter activity"/>
    <property type="evidence" value="ECO:0000318"/>
    <property type="project" value="GO_Central"/>
</dbReference>
<dbReference type="GO" id="GO:0046872">
    <property type="term" value="F:metal ion binding"/>
    <property type="evidence" value="ECO:0007669"/>
    <property type="project" value="UniProtKB-KW"/>
</dbReference>
<dbReference type="GO" id="GO:0015175">
    <property type="term" value="F:neutral L-amino acid transmembrane transporter activity"/>
    <property type="evidence" value="ECO:0000318"/>
    <property type="project" value="GO_Central"/>
</dbReference>
<dbReference type="GO" id="GO:0031223">
    <property type="term" value="P:auditory behavior"/>
    <property type="evidence" value="ECO:0007669"/>
    <property type="project" value="Ensembl"/>
</dbReference>
<dbReference type="GO" id="GO:0048667">
    <property type="term" value="P:cell morphogenesis involved in neuron differentiation"/>
    <property type="evidence" value="ECO:0007669"/>
    <property type="project" value="Ensembl"/>
</dbReference>
<dbReference type="GO" id="GO:0071314">
    <property type="term" value="P:cellular response to cocaine"/>
    <property type="evidence" value="ECO:0007669"/>
    <property type="project" value="Ensembl"/>
</dbReference>
<dbReference type="GO" id="GO:1902476">
    <property type="term" value="P:chloride transmembrane transport"/>
    <property type="evidence" value="ECO:0000250"/>
    <property type="project" value="UniProtKB"/>
</dbReference>
<dbReference type="GO" id="GO:0021545">
    <property type="term" value="P:cranial nerve development"/>
    <property type="evidence" value="ECO:0007669"/>
    <property type="project" value="Ensembl"/>
</dbReference>
<dbReference type="GO" id="GO:0070779">
    <property type="term" value="P:D-aspartate import across plasma membrane"/>
    <property type="evidence" value="ECO:0000250"/>
    <property type="project" value="UniProtKB"/>
</dbReference>
<dbReference type="GO" id="GO:0009449">
    <property type="term" value="P:gamma-aminobutyric acid biosynthetic process"/>
    <property type="evidence" value="ECO:0007669"/>
    <property type="project" value="Ensembl"/>
</dbReference>
<dbReference type="GO" id="GO:0006883">
    <property type="term" value="P:intracellular sodium ion homeostasis"/>
    <property type="evidence" value="ECO:0007669"/>
    <property type="project" value="Ensembl"/>
</dbReference>
<dbReference type="GO" id="GO:0140009">
    <property type="term" value="P:L-aspartate import across plasma membrane"/>
    <property type="evidence" value="ECO:0000250"/>
    <property type="project" value="UniProtKB"/>
</dbReference>
<dbReference type="GO" id="GO:0070778">
    <property type="term" value="P:L-aspartate transmembrane transport"/>
    <property type="evidence" value="ECO:0000316"/>
    <property type="project" value="ARUK-UCL"/>
</dbReference>
<dbReference type="GO" id="GO:0098712">
    <property type="term" value="P:L-glutamate import across plasma membrane"/>
    <property type="evidence" value="ECO:0000250"/>
    <property type="project" value="UniProtKB"/>
</dbReference>
<dbReference type="GO" id="GO:0015813">
    <property type="term" value="P:L-glutamate transmembrane transport"/>
    <property type="evidence" value="ECO:0000314"/>
    <property type="project" value="MGI"/>
</dbReference>
<dbReference type="GO" id="GO:0050885">
    <property type="term" value="P:neuromuscular process controlling balance"/>
    <property type="evidence" value="ECO:0007669"/>
    <property type="project" value="Ensembl"/>
</dbReference>
<dbReference type="GO" id="GO:0050806">
    <property type="term" value="P:positive regulation of synaptic transmission"/>
    <property type="evidence" value="ECO:0007669"/>
    <property type="project" value="Ensembl"/>
</dbReference>
<dbReference type="GO" id="GO:0071805">
    <property type="term" value="P:potassium ion transmembrane transport"/>
    <property type="evidence" value="ECO:0000250"/>
    <property type="project" value="UniProtKB"/>
</dbReference>
<dbReference type="GO" id="GO:0043200">
    <property type="term" value="P:response to amino acid"/>
    <property type="evidence" value="ECO:0000314"/>
    <property type="project" value="MGI"/>
</dbReference>
<dbReference type="GO" id="GO:0046677">
    <property type="term" value="P:response to antibiotic"/>
    <property type="evidence" value="ECO:0007669"/>
    <property type="project" value="Ensembl"/>
</dbReference>
<dbReference type="GO" id="GO:0009416">
    <property type="term" value="P:response to light stimulus"/>
    <property type="evidence" value="ECO:0007669"/>
    <property type="project" value="Ensembl"/>
</dbReference>
<dbReference type="GO" id="GO:0009611">
    <property type="term" value="P:response to wounding"/>
    <property type="evidence" value="ECO:0007669"/>
    <property type="project" value="Ensembl"/>
</dbReference>
<dbReference type="GO" id="GO:0009410">
    <property type="term" value="P:response to xenobiotic stimulus"/>
    <property type="evidence" value="ECO:0007669"/>
    <property type="project" value="Ensembl"/>
</dbReference>
<dbReference type="GO" id="GO:0007605">
    <property type="term" value="P:sensory perception of sound"/>
    <property type="evidence" value="ECO:0007669"/>
    <property type="project" value="Ensembl"/>
</dbReference>
<dbReference type="GO" id="GO:0070633">
    <property type="term" value="P:transepithelial transport"/>
    <property type="evidence" value="ECO:0000316"/>
    <property type="project" value="ARUK-UCL"/>
</dbReference>
<dbReference type="GO" id="GO:0150104">
    <property type="term" value="P:transport across blood-brain barrier"/>
    <property type="evidence" value="ECO:0000316"/>
    <property type="project" value="ARUK-UCL"/>
</dbReference>
<dbReference type="FunFam" id="1.10.3860.10:FF:000002">
    <property type="entry name" value="Amino acid transporter"/>
    <property type="match status" value="1"/>
</dbReference>
<dbReference type="Gene3D" id="1.10.3860.10">
    <property type="entry name" value="Sodium:dicarboxylate symporter"/>
    <property type="match status" value="1"/>
</dbReference>
<dbReference type="InterPro" id="IPR050746">
    <property type="entry name" value="DAACS"/>
</dbReference>
<dbReference type="InterPro" id="IPR001991">
    <property type="entry name" value="Na-dicarboxylate_symporter"/>
</dbReference>
<dbReference type="InterPro" id="IPR018107">
    <property type="entry name" value="Na-dicarboxylate_symporter_CS"/>
</dbReference>
<dbReference type="InterPro" id="IPR036458">
    <property type="entry name" value="Na:dicarbo_symporter_sf"/>
</dbReference>
<dbReference type="PANTHER" id="PTHR11958:SF24">
    <property type="entry name" value="EXCITATORY AMINO ACID TRANSPORTER 1"/>
    <property type="match status" value="1"/>
</dbReference>
<dbReference type="PANTHER" id="PTHR11958">
    <property type="entry name" value="SODIUM/DICARBOXYLATE SYMPORTER-RELATED"/>
    <property type="match status" value="1"/>
</dbReference>
<dbReference type="Pfam" id="PF00375">
    <property type="entry name" value="SDF"/>
    <property type="match status" value="1"/>
</dbReference>
<dbReference type="PRINTS" id="PR00173">
    <property type="entry name" value="EDTRNSPORT"/>
</dbReference>
<dbReference type="SUPFAM" id="SSF118215">
    <property type="entry name" value="Proton glutamate symport protein"/>
    <property type="match status" value="1"/>
</dbReference>
<dbReference type="PROSITE" id="PS00713">
    <property type="entry name" value="NA_DICARBOXYL_SYMP_1"/>
    <property type="match status" value="1"/>
</dbReference>
<dbReference type="PROSITE" id="PS00714">
    <property type="entry name" value="NA_DICARBOXYL_SYMP_2"/>
    <property type="match status" value="1"/>
</dbReference>
<accession>P46411</accession>
<accession>Q0VCK3</accession>